<gene>
    <name evidence="2" type="primary">nuoB</name>
    <name type="ordered locus">WD_1123</name>
</gene>
<feature type="chain" id="PRO_0000358507" description="NADH-quinone oxidoreductase subunit B">
    <location>
        <begin position="1"/>
        <end position="168"/>
    </location>
</feature>
<feature type="binding site" evidence="2">
    <location>
        <position position="49"/>
    </location>
    <ligand>
        <name>[4Fe-4S] cluster</name>
        <dbReference type="ChEBI" id="CHEBI:49883"/>
    </ligand>
</feature>
<feature type="binding site" evidence="2">
    <location>
        <position position="50"/>
    </location>
    <ligand>
        <name>[4Fe-4S] cluster</name>
        <dbReference type="ChEBI" id="CHEBI:49883"/>
    </ligand>
</feature>
<feature type="binding site" evidence="2">
    <location>
        <position position="114"/>
    </location>
    <ligand>
        <name>[4Fe-4S] cluster</name>
        <dbReference type="ChEBI" id="CHEBI:49883"/>
    </ligand>
</feature>
<feature type="binding site" evidence="2">
    <location>
        <position position="144"/>
    </location>
    <ligand>
        <name>[4Fe-4S] cluster</name>
        <dbReference type="ChEBI" id="CHEBI:49883"/>
    </ligand>
</feature>
<evidence type="ECO:0000250" key="1"/>
<evidence type="ECO:0000255" key="2">
    <source>
        <dbReference type="HAMAP-Rule" id="MF_01356"/>
    </source>
</evidence>
<dbReference type="EC" id="7.1.1.-" evidence="2"/>
<dbReference type="EMBL" id="AE017196">
    <property type="protein sequence ID" value="AAS14776.1"/>
    <property type="molecule type" value="Genomic_DNA"/>
</dbReference>
<dbReference type="RefSeq" id="WP_006279574.1">
    <property type="nucleotide sequence ID" value="NZ_OX384529.1"/>
</dbReference>
<dbReference type="SMR" id="Q73G42"/>
<dbReference type="EnsemblBacteria" id="AAS14776">
    <property type="protein sequence ID" value="AAS14776"/>
    <property type="gene ID" value="WD_1123"/>
</dbReference>
<dbReference type="KEGG" id="wol:WD_1123"/>
<dbReference type="eggNOG" id="COG0377">
    <property type="taxonomic scope" value="Bacteria"/>
</dbReference>
<dbReference type="Proteomes" id="UP000008215">
    <property type="component" value="Chromosome"/>
</dbReference>
<dbReference type="GO" id="GO:0005886">
    <property type="term" value="C:plasma membrane"/>
    <property type="evidence" value="ECO:0007669"/>
    <property type="project" value="UniProtKB-SubCell"/>
</dbReference>
<dbReference type="GO" id="GO:0045271">
    <property type="term" value="C:respiratory chain complex I"/>
    <property type="evidence" value="ECO:0007669"/>
    <property type="project" value="TreeGrafter"/>
</dbReference>
<dbReference type="GO" id="GO:0051539">
    <property type="term" value="F:4 iron, 4 sulfur cluster binding"/>
    <property type="evidence" value="ECO:0007669"/>
    <property type="project" value="UniProtKB-KW"/>
</dbReference>
<dbReference type="GO" id="GO:0005506">
    <property type="term" value="F:iron ion binding"/>
    <property type="evidence" value="ECO:0007669"/>
    <property type="project" value="UniProtKB-UniRule"/>
</dbReference>
<dbReference type="GO" id="GO:0008137">
    <property type="term" value="F:NADH dehydrogenase (ubiquinone) activity"/>
    <property type="evidence" value="ECO:0007669"/>
    <property type="project" value="InterPro"/>
</dbReference>
<dbReference type="GO" id="GO:0050136">
    <property type="term" value="F:NADH:ubiquinone reductase (non-electrogenic) activity"/>
    <property type="evidence" value="ECO:0007669"/>
    <property type="project" value="UniProtKB-UniRule"/>
</dbReference>
<dbReference type="GO" id="GO:0048038">
    <property type="term" value="F:quinone binding"/>
    <property type="evidence" value="ECO:0007669"/>
    <property type="project" value="UniProtKB-KW"/>
</dbReference>
<dbReference type="GO" id="GO:0009060">
    <property type="term" value="P:aerobic respiration"/>
    <property type="evidence" value="ECO:0007669"/>
    <property type="project" value="TreeGrafter"/>
</dbReference>
<dbReference type="GO" id="GO:0015990">
    <property type="term" value="P:electron transport coupled proton transport"/>
    <property type="evidence" value="ECO:0007669"/>
    <property type="project" value="TreeGrafter"/>
</dbReference>
<dbReference type="FunFam" id="3.40.50.12280:FF:000001">
    <property type="entry name" value="NADH-quinone oxidoreductase subunit B 2"/>
    <property type="match status" value="1"/>
</dbReference>
<dbReference type="Gene3D" id="3.40.50.12280">
    <property type="match status" value="1"/>
</dbReference>
<dbReference type="HAMAP" id="MF_01356">
    <property type="entry name" value="NDH1_NuoB"/>
    <property type="match status" value="1"/>
</dbReference>
<dbReference type="InterPro" id="IPR006137">
    <property type="entry name" value="NADH_UbQ_OxRdtase-like_20kDa"/>
</dbReference>
<dbReference type="InterPro" id="IPR006138">
    <property type="entry name" value="NADH_UQ_OxRdtase_20Kd_su"/>
</dbReference>
<dbReference type="NCBIfam" id="TIGR01957">
    <property type="entry name" value="nuoB_fam"/>
    <property type="match status" value="1"/>
</dbReference>
<dbReference type="NCBIfam" id="NF005012">
    <property type="entry name" value="PRK06411.1"/>
    <property type="match status" value="1"/>
</dbReference>
<dbReference type="PANTHER" id="PTHR11995">
    <property type="entry name" value="NADH DEHYDROGENASE"/>
    <property type="match status" value="1"/>
</dbReference>
<dbReference type="PANTHER" id="PTHR11995:SF14">
    <property type="entry name" value="NADH DEHYDROGENASE [UBIQUINONE] IRON-SULFUR PROTEIN 7, MITOCHONDRIAL"/>
    <property type="match status" value="1"/>
</dbReference>
<dbReference type="Pfam" id="PF01058">
    <property type="entry name" value="Oxidored_q6"/>
    <property type="match status" value="1"/>
</dbReference>
<dbReference type="SUPFAM" id="SSF56770">
    <property type="entry name" value="HydA/Nqo6-like"/>
    <property type="match status" value="1"/>
</dbReference>
<dbReference type="PROSITE" id="PS01150">
    <property type="entry name" value="COMPLEX1_20K"/>
    <property type="match status" value="1"/>
</dbReference>
<organism>
    <name type="scientific">Wolbachia pipientis wMel</name>
    <dbReference type="NCBI Taxonomy" id="163164"/>
    <lineage>
        <taxon>Bacteria</taxon>
        <taxon>Pseudomonadati</taxon>
        <taxon>Pseudomonadota</taxon>
        <taxon>Alphaproteobacteria</taxon>
        <taxon>Rickettsiales</taxon>
        <taxon>Anaplasmataceae</taxon>
        <taxon>Wolbachieae</taxon>
        <taxon>Wolbachia</taxon>
    </lineage>
</organism>
<comment type="function">
    <text evidence="1">NDH-1 shuttles electrons from NADH, via FMN and iron-sulfur (Fe-S) centers, to quinones in the respiratory chain. Couples the redox reaction to proton translocation (for every two electrons transferred, four hydrogen ions are translocated across the cytoplasmic membrane), and thus conserves the redox energy in a proton gradient (By similarity).</text>
</comment>
<comment type="catalytic activity">
    <reaction evidence="2">
        <text>a quinone + NADH + 5 H(+)(in) = a quinol + NAD(+) + 4 H(+)(out)</text>
        <dbReference type="Rhea" id="RHEA:57888"/>
        <dbReference type="ChEBI" id="CHEBI:15378"/>
        <dbReference type="ChEBI" id="CHEBI:24646"/>
        <dbReference type="ChEBI" id="CHEBI:57540"/>
        <dbReference type="ChEBI" id="CHEBI:57945"/>
        <dbReference type="ChEBI" id="CHEBI:132124"/>
    </reaction>
</comment>
<comment type="cofactor">
    <cofactor evidence="2">
        <name>[4Fe-4S] cluster</name>
        <dbReference type="ChEBI" id="CHEBI:49883"/>
    </cofactor>
    <text evidence="2">Binds 1 [4Fe-4S] cluster.</text>
</comment>
<comment type="subunit">
    <text evidence="2">NDH-1 is composed of 14 different subunits. Subunits NuoB, C, D, E, F, and G constitute the peripheral sector of the complex.</text>
</comment>
<comment type="subcellular location">
    <subcellularLocation>
        <location evidence="2">Cell membrane</location>
        <topology evidence="2">Peripheral membrane protein</topology>
        <orientation evidence="2">Cytoplasmic side</orientation>
    </subcellularLocation>
</comment>
<comment type="similarity">
    <text evidence="2">Belongs to the complex I 20 kDa subunit family.</text>
</comment>
<reference key="1">
    <citation type="journal article" date="2004" name="PLoS Biol.">
        <title>Phylogenomics of the reproductive parasite Wolbachia pipientis wMel: a streamlined genome overrun by mobile genetic elements.</title>
        <authorList>
            <person name="Wu M."/>
            <person name="Sun L.V."/>
            <person name="Vamathevan J.J."/>
            <person name="Riegler M."/>
            <person name="DeBoy R.T."/>
            <person name="Brownlie J.C."/>
            <person name="McGraw E.A."/>
            <person name="Martin W."/>
            <person name="Esser C."/>
            <person name="Ahmadinejad N."/>
            <person name="Wiegand C."/>
            <person name="Madupu R."/>
            <person name="Beanan M.J."/>
            <person name="Brinkac L.M."/>
            <person name="Daugherty S.C."/>
            <person name="Durkin A.S."/>
            <person name="Kolonay J.F."/>
            <person name="Nelson W.C."/>
            <person name="Mohamoud Y."/>
            <person name="Lee P."/>
            <person name="Berry K.J."/>
            <person name="Young M.B."/>
            <person name="Utterback T.R."/>
            <person name="Weidman J.F."/>
            <person name="Nierman W.C."/>
            <person name="Paulsen I.T."/>
            <person name="Nelson K.E."/>
            <person name="Tettelin H."/>
            <person name="O'Neill S.L."/>
            <person name="Eisen J.A."/>
        </authorList>
    </citation>
    <scope>NUCLEOTIDE SEQUENCE [LARGE SCALE GENOMIC DNA]</scope>
</reference>
<sequence length="168" mass="18821">MTNQILSNDDWGRYKKEGFLVTKFGDLTDYVMNWARSGSLWPMTFGLACCAVEMMHTASSRYDLDRYGIMFRASPRQSDVMIVAGTLTNKMAAALRKVYDQMADPKYVISMGSCANGGGYYHYSYSVVRGCDRIVPVDVYVPGCPPTAEALLYGMLCLQNKIKRTRNG</sequence>
<name>NUOB_WOLPM</name>
<protein>
    <recommendedName>
        <fullName evidence="2">NADH-quinone oxidoreductase subunit B</fullName>
        <ecNumber evidence="2">7.1.1.-</ecNumber>
    </recommendedName>
    <alternativeName>
        <fullName evidence="2">NADH dehydrogenase I subunit B</fullName>
    </alternativeName>
    <alternativeName>
        <fullName evidence="2">NDH-1 subunit B</fullName>
    </alternativeName>
</protein>
<proteinExistence type="inferred from homology"/>
<accession>Q73G42</accession>
<keyword id="KW-0004">4Fe-4S</keyword>
<keyword id="KW-1003">Cell membrane</keyword>
<keyword id="KW-0408">Iron</keyword>
<keyword id="KW-0411">Iron-sulfur</keyword>
<keyword id="KW-0472">Membrane</keyword>
<keyword id="KW-0479">Metal-binding</keyword>
<keyword id="KW-0520">NAD</keyword>
<keyword id="KW-0874">Quinone</keyword>
<keyword id="KW-1278">Translocase</keyword>
<keyword id="KW-0813">Transport</keyword>
<keyword id="KW-0830">Ubiquinone</keyword>